<name>SELO_PSEP7</name>
<evidence type="ECO:0000255" key="1">
    <source>
        <dbReference type="HAMAP-Rule" id="MF_00692"/>
    </source>
</evidence>
<reference key="1">
    <citation type="submission" date="2007-06" db="EMBL/GenBank/DDBJ databases">
        <authorList>
            <person name="Dodson R.J."/>
            <person name="Harkins D."/>
            <person name="Paulsen I.T."/>
        </authorList>
    </citation>
    <scope>NUCLEOTIDE SEQUENCE [LARGE SCALE GENOMIC DNA]</scope>
    <source>
        <strain>DSM 24068 / PA7</strain>
    </source>
</reference>
<dbReference type="EC" id="2.7.7.-" evidence="1"/>
<dbReference type="EC" id="2.7.7.108" evidence="1"/>
<dbReference type="EMBL" id="CP000744">
    <property type="protein sequence ID" value="ABR81196.1"/>
    <property type="molecule type" value="Genomic_DNA"/>
</dbReference>
<dbReference type="RefSeq" id="WP_012077705.1">
    <property type="nucleotide sequence ID" value="NC_009656.1"/>
</dbReference>
<dbReference type="SMR" id="A6VDE4"/>
<dbReference type="KEGG" id="pap:PSPA7_5760"/>
<dbReference type="HOGENOM" id="CLU_010245_4_0_6"/>
<dbReference type="Proteomes" id="UP000001582">
    <property type="component" value="Chromosome"/>
</dbReference>
<dbReference type="GO" id="GO:0070733">
    <property type="term" value="F:AMPylase activity"/>
    <property type="evidence" value="ECO:0007669"/>
    <property type="project" value="TreeGrafter"/>
</dbReference>
<dbReference type="GO" id="GO:0005524">
    <property type="term" value="F:ATP binding"/>
    <property type="evidence" value="ECO:0007669"/>
    <property type="project" value="UniProtKB-UniRule"/>
</dbReference>
<dbReference type="GO" id="GO:0000287">
    <property type="term" value="F:magnesium ion binding"/>
    <property type="evidence" value="ECO:0007669"/>
    <property type="project" value="UniProtKB-UniRule"/>
</dbReference>
<dbReference type="HAMAP" id="MF_00692">
    <property type="entry name" value="YdiU_SelO"/>
    <property type="match status" value="1"/>
</dbReference>
<dbReference type="InterPro" id="IPR003846">
    <property type="entry name" value="SelO"/>
</dbReference>
<dbReference type="NCBIfam" id="NF000658">
    <property type="entry name" value="PRK00029.1"/>
    <property type="match status" value="1"/>
</dbReference>
<dbReference type="NCBIfam" id="NF045949">
    <property type="entry name" value="PrtAdtaseSelOPseudom"/>
    <property type="match status" value="1"/>
</dbReference>
<dbReference type="PANTHER" id="PTHR32057">
    <property type="entry name" value="PROTEIN ADENYLYLTRANSFERASE SELO, MITOCHONDRIAL"/>
    <property type="match status" value="1"/>
</dbReference>
<dbReference type="PANTHER" id="PTHR32057:SF14">
    <property type="entry name" value="PROTEIN ADENYLYLTRANSFERASE SELO, MITOCHONDRIAL"/>
    <property type="match status" value="1"/>
</dbReference>
<dbReference type="Pfam" id="PF02696">
    <property type="entry name" value="SelO"/>
    <property type="match status" value="1"/>
</dbReference>
<comment type="function">
    <text evidence="1">Nucleotidyltransferase involved in the post-translational modification of proteins. It can catalyze the addition of adenosine monophosphate (AMP) or uridine monophosphate (UMP) to a protein, resulting in modifications known as AMPylation and UMPylation.</text>
</comment>
<comment type="catalytic activity">
    <reaction evidence="1">
        <text>L-seryl-[protein] + ATP = 3-O-(5'-adenylyl)-L-seryl-[protein] + diphosphate</text>
        <dbReference type="Rhea" id="RHEA:58120"/>
        <dbReference type="Rhea" id="RHEA-COMP:9863"/>
        <dbReference type="Rhea" id="RHEA-COMP:15073"/>
        <dbReference type="ChEBI" id="CHEBI:29999"/>
        <dbReference type="ChEBI" id="CHEBI:30616"/>
        <dbReference type="ChEBI" id="CHEBI:33019"/>
        <dbReference type="ChEBI" id="CHEBI:142516"/>
        <dbReference type="EC" id="2.7.7.108"/>
    </reaction>
</comment>
<comment type="catalytic activity">
    <reaction evidence="1">
        <text>L-threonyl-[protein] + ATP = 3-O-(5'-adenylyl)-L-threonyl-[protein] + diphosphate</text>
        <dbReference type="Rhea" id="RHEA:54292"/>
        <dbReference type="Rhea" id="RHEA-COMP:11060"/>
        <dbReference type="Rhea" id="RHEA-COMP:13847"/>
        <dbReference type="ChEBI" id="CHEBI:30013"/>
        <dbReference type="ChEBI" id="CHEBI:30616"/>
        <dbReference type="ChEBI" id="CHEBI:33019"/>
        <dbReference type="ChEBI" id="CHEBI:138113"/>
        <dbReference type="EC" id="2.7.7.108"/>
    </reaction>
</comment>
<comment type="catalytic activity">
    <reaction evidence="1">
        <text>L-tyrosyl-[protein] + ATP = O-(5'-adenylyl)-L-tyrosyl-[protein] + diphosphate</text>
        <dbReference type="Rhea" id="RHEA:54288"/>
        <dbReference type="Rhea" id="RHEA-COMP:10136"/>
        <dbReference type="Rhea" id="RHEA-COMP:13846"/>
        <dbReference type="ChEBI" id="CHEBI:30616"/>
        <dbReference type="ChEBI" id="CHEBI:33019"/>
        <dbReference type="ChEBI" id="CHEBI:46858"/>
        <dbReference type="ChEBI" id="CHEBI:83624"/>
        <dbReference type="EC" id="2.7.7.108"/>
    </reaction>
</comment>
<comment type="catalytic activity">
    <reaction evidence="1">
        <text>L-histidyl-[protein] + UTP = N(tele)-(5'-uridylyl)-L-histidyl-[protein] + diphosphate</text>
        <dbReference type="Rhea" id="RHEA:83891"/>
        <dbReference type="Rhea" id="RHEA-COMP:9745"/>
        <dbReference type="Rhea" id="RHEA-COMP:20239"/>
        <dbReference type="ChEBI" id="CHEBI:29979"/>
        <dbReference type="ChEBI" id="CHEBI:33019"/>
        <dbReference type="ChEBI" id="CHEBI:46398"/>
        <dbReference type="ChEBI" id="CHEBI:233474"/>
    </reaction>
</comment>
<comment type="catalytic activity">
    <reaction evidence="1">
        <text>L-seryl-[protein] + UTP = O-(5'-uridylyl)-L-seryl-[protein] + diphosphate</text>
        <dbReference type="Rhea" id="RHEA:64604"/>
        <dbReference type="Rhea" id="RHEA-COMP:9863"/>
        <dbReference type="Rhea" id="RHEA-COMP:16635"/>
        <dbReference type="ChEBI" id="CHEBI:29999"/>
        <dbReference type="ChEBI" id="CHEBI:33019"/>
        <dbReference type="ChEBI" id="CHEBI:46398"/>
        <dbReference type="ChEBI" id="CHEBI:156051"/>
    </reaction>
</comment>
<comment type="catalytic activity">
    <reaction evidence="1">
        <text>L-tyrosyl-[protein] + UTP = O-(5'-uridylyl)-L-tyrosyl-[protein] + diphosphate</text>
        <dbReference type="Rhea" id="RHEA:83887"/>
        <dbReference type="Rhea" id="RHEA-COMP:10136"/>
        <dbReference type="Rhea" id="RHEA-COMP:20238"/>
        <dbReference type="ChEBI" id="CHEBI:33019"/>
        <dbReference type="ChEBI" id="CHEBI:46398"/>
        <dbReference type="ChEBI" id="CHEBI:46858"/>
        <dbReference type="ChEBI" id="CHEBI:90602"/>
    </reaction>
</comment>
<comment type="cofactor">
    <cofactor evidence="1">
        <name>Mg(2+)</name>
        <dbReference type="ChEBI" id="CHEBI:18420"/>
    </cofactor>
    <cofactor evidence="1">
        <name>Mn(2+)</name>
        <dbReference type="ChEBI" id="CHEBI:29035"/>
    </cofactor>
</comment>
<comment type="similarity">
    <text evidence="1">Belongs to the SELO family.</text>
</comment>
<accession>A6VDE4</accession>
<organism>
    <name type="scientific">Pseudomonas paraeruginosa (strain DSM 24068 / PA7)</name>
    <name type="common">Pseudomonas aeruginosa (strain PA7)</name>
    <dbReference type="NCBI Taxonomy" id="381754"/>
    <lineage>
        <taxon>Bacteria</taxon>
        <taxon>Pseudomonadati</taxon>
        <taxon>Pseudomonadota</taxon>
        <taxon>Gammaproteobacteria</taxon>
        <taxon>Pseudomonadales</taxon>
        <taxon>Pseudomonadaceae</taxon>
        <taxon>Pseudomonas</taxon>
        <taxon>Pseudomonas paraeruginosa</taxon>
    </lineage>
</organism>
<sequence>MKSLDDLDFDNRFARLGDAFSTEVLPDPIAEPRLVVASPAALALLDLPAEASDEPVFAELFGGHKLWSEAEPRAMVYSGHQFGSYNPRLGDGRGLLLGEVLNQAGEHWDLHLKGAGQTPYSRMGDGRAVLRSSIREFLASEALPALGIPSSRAACVIGSSTPVWREKKESAAMLLRLAPSHVRFGHFEYFYYTRQHDQLKQLAAFVLEHHFADCGAAERPYAAMFRQVVERNAELIARWQAYGFCHGVMNTDNMSILGITFDYGPYAFLDDFDANHICNHSDDSGRYSFSNQVPIAHWNLAALAQALTPLVEVDELRASLELFLPLYQAHYLDLMRRRLGLGVAVENDQALVQELLQRMQGSAVDYSLFFRRLGEDAPEQALARLRDDFVDREAFDRWGEAYRRRVEAEGGEQAARRQRMHAVNPLYVLRNYLAQQAIEAAEQGDYTEVRLLHRLLARPFEEQPGMERFTRRPPDWGRHLEISCSS</sequence>
<feature type="chain" id="PRO_1000062031" description="Protein nucleotidyltransferase YdiU">
    <location>
        <begin position="1"/>
        <end position="486"/>
    </location>
</feature>
<feature type="active site" description="Proton acceptor" evidence="1">
    <location>
        <position position="252"/>
    </location>
</feature>
<feature type="binding site" evidence="1">
    <location>
        <position position="90"/>
    </location>
    <ligand>
        <name>ATP</name>
        <dbReference type="ChEBI" id="CHEBI:30616"/>
    </ligand>
</feature>
<feature type="binding site" evidence="1">
    <location>
        <position position="92"/>
    </location>
    <ligand>
        <name>ATP</name>
        <dbReference type="ChEBI" id="CHEBI:30616"/>
    </ligand>
</feature>
<feature type="binding site" evidence="1">
    <location>
        <position position="93"/>
    </location>
    <ligand>
        <name>ATP</name>
        <dbReference type="ChEBI" id="CHEBI:30616"/>
    </ligand>
</feature>
<feature type="binding site" evidence="1">
    <location>
        <position position="113"/>
    </location>
    <ligand>
        <name>ATP</name>
        <dbReference type="ChEBI" id="CHEBI:30616"/>
    </ligand>
</feature>
<feature type="binding site" evidence="1">
    <location>
        <position position="125"/>
    </location>
    <ligand>
        <name>ATP</name>
        <dbReference type="ChEBI" id="CHEBI:30616"/>
    </ligand>
</feature>
<feature type="binding site" evidence="1">
    <location>
        <position position="126"/>
    </location>
    <ligand>
        <name>ATP</name>
        <dbReference type="ChEBI" id="CHEBI:30616"/>
    </ligand>
</feature>
<feature type="binding site" evidence="1">
    <location>
        <position position="176"/>
    </location>
    <ligand>
        <name>ATP</name>
        <dbReference type="ChEBI" id="CHEBI:30616"/>
    </ligand>
</feature>
<feature type="binding site" evidence="1">
    <location>
        <position position="183"/>
    </location>
    <ligand>
        <name>ATP</name>
        <dbReference type="ChEBI" id="CHEBI:30616"/>
    </ligand>
</feature>
<feature type="binding site" evidence="1">
    <location>
        <position position="253"/>
    </location>
    <ligand>
        <name>Mg(2+)</name>
        <dbReference type="ChEBI" id="CHEBI:18420"/>
    </ligand>
</feature>
<feature type="binding site" evidence="1">
    <location>
        <position position="262"/>
    </location>
    <ligand>
        <name>ATP</name>
        <dbReference type="ChEBI" id="CHEBI:30616"/>
    </ligand>
</feature>
<feature type="binding site" evidence="1">
    <location>
        <position position="262"/>
    </location>
    <ligand>
        <name>Mg(2+)</name>
        <dbReference type="ChEBI" id="CHEBI:18420"/>
    </ligand>
</feature>
<gene>
    <name evidence="1" type="primary">ydiU</name>
    <name evidence="1" type="synonym">selO</name>
    <name type="ordered locus">PSPA7_5760</name>
</gene>
<keyword id="KW-0067">ATP-binding</keyword>
<keyword id="KW-0460">Magnesium</keyword>
<keyword id="KW-0464">Manganese</keyword>
<keyword id="KW-0479">Metal-binding</keyword>
<keyword id="KW-0547">Nucleotide-binding</keyword>
<keyword id="KW-0548">Nucleotidyltransferase</keyword>
<keyword id="KW-0808">Transferase</keyword>
<proteinExistence type="inferred from homology"/>
<protein>
    <recommendedName>
        <fullName evidence="1">Protein nucleotidyltransferase YdiU</fullName>
        <ecNumber evidence="1">2.7.7.-</ecNumber>
    </recommendedName>
    <alternativeName>
        <fullName evidence="1">Protein adenylyltransferase YdiU</fullName>
        <ecNumber evidence="1">2.7.7.108</ecNumber>
    </alternativeName>
    <alternativeName>
        <fullName evidence="1">Protein uridylyltransferase YdiU</fullName>
        <ecNumber evidence="1">2.7.7.-</ecNumber>
    </alternativeName>
</protein>